<sequence length="2278" mass="250097">MASKPFYPIEFNPSVELQVLRSAHLRVGGREQMFETINDLNDHVRGVVAKLWCKHLHRSLAAAPTFTEEGLLDSFLSKPPVDINPDTTFRELFGINPHEQFPLSIHDLAKLQGELVDAARNPGHVLRRHYSTDSLTALINKITKFVPVHATLQEMQARRAFERERAELFRELPHADLDVSRQQKSYFYAMWRQVVKKSKEFFIPLVKCTSWRKKFTEPAEIVRQVLVHFCEGMRSQFSTNANYINLSLIAKLRPTVLTMILQQHKNTYRGWLATVTALVEVYSNLFQDMRDTAVSAVSAITLVFETIKDFVVNVIDLVKSTFQSQGPTSCGWAAIIAGALLILMKLSGCSNTTSYWHRLLKVCGGVTTIAAAARAVVWVRDIIAEADGKARLKKYMARTAALLELAASRDVTGTDELKRLLDCFTQLIEEGTELIQEFGTSPLAGLTRSYVSELESTANSIRSTILLDTPRKTPVAIILTGPPGIGKTRLAQHLAAGFGKVSNFSVTLDHHDSYTGNEVAIWDEFDVDTQGKFVETMIGVVNTAPYPLNCDRVENKGKVFTSDYIICTSNYPTSVLPDNPRAGAFYRRVTTIDVSSPTIEDWKKKNPGKKPPPDLYKNDFTHLRLSVRPFLGYNPEGDTLDGVRVKPVLTSVDGLSRLMETKFKEQGNEHRNLWITCPRDLVAPAASGLKAYMAANRALAQVFQEPSSQDIGETCTSRVYVSCNNPPPTYSGRVVKITAINPWDASLANSMLSMFETTSHIPASIQREIMYRVWDPLVHLQTREPNTQMLPYINRVVPVSSAFDFIRGLRHHLGLCSVKGMWRAYQGWNSSSSILEFLSKHMADVAFPHNPECTVFRAPDGDVIFYTFGSYACFVSPARVPFVGEPPKNVHSNITRNMTWAETLRLLAETITESLVHFGPFLLMMHNVSYLATRSGREEEAKGKTKHGRGAKHARRGGVSLSDDEYDEWRDLVRDWRQDMTVGEFVELRERYALGMDSEDVQRYRAWLELRAMRMGAGAYQHATIIGRGGVQDTIIRTQPMRAPRAPRNQGYDEEAPTPIVTFTSGGDHIGYGCHMGNGVVVTVTHVASASDQVEGQDFAIRKTEGETTWVNTNLGHLPHYQIGDGAPVYYSARLHPVTTLAEGTYETPNITVQGYHLRIINGYPTKRGDCGTPYFDSCRRLVGLHAATSTNGETKLAQRVTKTSKVENAFAWKGLPVVRGPDCGGMPTGTRYHRSPAWPNPVEGETHAPAPFGSGDERYKFSQVEMLVNGLKPYSEPTPGIPPALLQRAATHTRTYLETIIGTHRSPNLSFSEACSLLEKSTSCGPFVAGQKGDYWDEDKQCYTGVLAEHLAKAWDAANRGVAPQNAYKLALKDELRPIEKNAQGKRRLLWGCDAGATLVATAAFKGVATRLQAVAPMTPVSVGINMDSYQVEVLNESLKGGVLYCLDYSKWDSTQHPAVTAASLGILERLSEATPITTSAVELLSSPARGHLNDIVFITKSGLPSGMPFTSVINSLNHMTYFAAAVLKAYEQHGAPYTGNVFQVETVHTYGDDCLYSVCPATASIFQTVLANLTSFGLKPTAADKSETIAPTHTPVFLKRTLTCTPRGVRGLLDITSIKRQFLWIKANRTVDINSPPAYDRDARGIQLENALAYASQHGHAVFEEVAELARHTAKAEGLVLTNVNYDQALATYESWFIGGTGLVQGSPSEETTKLVFEMEGLGQPQPQGGEKTSPQPVTPQDTIGPTAALLLPTQIETPNASAQRLELAMATGAVTSNVPNCIRECFASVTTIPWTTRQAANTFLGAIHLGPRINPYTAHLSAMFAGWGGGFQVRVTISGSGLFAGRAVTAILPPGVNPASVQNPGVFPHAFIDARTTEPILINLPDIRPVDFHRVDGDDATASVGLWVAQPLINPFQTGPVSTCWLSFETRPGPDFDFCLLKAPEQQMDNGISPASLLPRRLGRSRGNRMGGRIVGLVVVAAAEQVNHHFDARSTTLGWSTLPVEPIAGDISWYGDAGNKSIRGLVSAQGKGIIFPNIVNHWTDVALSSKTSNTTTIPTDTSTLGNLPGASGPLVTFADNGDVNESSAQNAILTAANQNFTSFSPTFDAAGIWVWMPWATDRPGASDSNIYISPTWVNGNPSHPIHEKCTNMIGTNFQFGGTGTNNIMLWQEQHFTSWPGAAEVYCSQLESTAEIFQNNIVNIPMNQMAVFNVETAGNSFQIAILPNGYCVTNAPVGTHQLLDYETSFKFVGLFPQSTSLQGPHGNSGRAVRFLE</sequence>
<comment type="function">
    <molecule>NS2</molecule>
    <text evidence="3 5">Together with NTPase and NS4, initiates the formation of the replication complex (By similarity). Induces the proliferation of the host smooth ER membranes forming long tubular structures (By similarity). These remodeled membranes probably form the viral factories that contain the replication complex (By similarity).</text>
</comment>
<comment type="function">
    <molecule>NTPase</molecule>
    <text evidence="3 4 5">Displays NTPase activity, but no helicase activity (By similarity). Induces the formation of convoluted membranes derived from the host ER (By similarity). These remodeled membranes probably form the viral factories that contain the replication complex (By similarity). Together with NS2 and NS4, initiates the formation of the replication complex (By similarity).</text>
</comment>
<comment type="function">
    <molecule>NS4</molecule>
    <text evidence="3 5">Probable key protein responsible for the formation of membrane alterations by the virus (By similarity). Induces the formation of convoluted membranes derived from the host ER (By similarity). These remodeled membranes probably form the viral factories that contain the replication complex (By similarity). Together with NS2 and NTPase, initiates the formation of the replication complex (By similarity).</text>
</comment>
<comment type="function">
    <molecule>Viral genome-linked protein</molecule>
    <text evidence="2">Viral genome-linked protein is covalently linked to the 5'-end of the positive-strand, negative-strand genomic RNAs and subgenomic RNA. Acts as a genome-linked replication primer. May recruit ribosome to viral RNA thereby promoting viral proteins translation. Interacts with host translation initiation complex to allow the translation of viral proteins.</text>
</comment>
<comment type="function">
    <molecule>Protease-polymerase p70</molecule>
    <text evidence="5">Protease-polymerase p76 processes the polyprotein: Pro-Pol is first released by autocleavage, then all other proteins are cleaved (By similarity). Cleaves host translation initiation factor eIF4G1, eIF4G2 and PABP1 thereby inducing a shutdown of host protein synthesis (By similarity). This shutdown may not prevent viral mRNA from being translated since viral Vpg replaces the cap (By similarity). It is also an RNA-directed RNA polymerase which replicates genomic and antigenomic viral RNA by recognizing specific signals (By similarity). Also transcribes a subgenomic mRNA by initiating RNA synthesis internally on antigenomic RNA (By similarity). This sgRNA codes for structural proteins. Catalyzes the covalent attachment VPg with viral RNAs (By similarity).</text>
</comment>
<comment type="function">
    <molecule>Capsid protein</molecule>
    <text evidence="1 7">Capsid protein self assembles to form an icosahedral capsid with a T=3 symmetry, about 38 nm in diameter, and consisting of 180 capsid proteins (By similarity). The capsid encapsulate the genomic RNA and VP2 proteins. Attaches virion to target cells, inducing endocytosis of the viral particle. Acidification of the endosome induces conformational change of capsid protein thereby injecting virus genomic RNA into host cytoplasm (By similarity).</text>
</comment>
<comment type="catalytic activity">
    <molecule>NTPase</molecule>
    <reaction evidence="4">
        <text>a ribonucleoside 5'-triphosphate + H2O = a ribonucleoside 5'-diphosphate + phosphate + H(+)</text>
        <dbReference type="Rhea" id="RHEA:23680"/>
        <dbReference type="ChEBI" id="CHEBI:15377"/>
        <dbReference type="ChEBI" id="CHEBI:15378"/>
        <dbReference type="ChEBI" id="CHEBI:43474"/>
        <dbReference type="ChEBI" id="CHEBI:57930"/>
        <dbReference type="ChEBI" id="CHEBI:61557"/>
        <dbReference type="EC" id="3.6.1.15"/>
    </reaction>
</comment>
<comment type="catalytic activity">
    <molecule>Protease-polymerase p70</molecule>
    <reaction evidence="8">
        <text>RNA(n) + a ribonucleoside 5'-triphosphate = RNA(n+1) + diphosphate</text>
        <dbReference type="Rhea" id="RHEA:21248"/>
        <dbReference type="Rhea" id="RHEA-COMP:14527"/>
        <dbReference type="Rhea" id="RHEA-COMP:17342"/>
        <dbReference type="ChEBI" id="CHEBI:33019"/>
        <dbReference type="ChEBI" id="CHEBI:61557"/>
        <dbReference type="ChEBI" id="CHEBI:140395"/>
        <dbReference type="EC" id="2.7.7.48"/>
    </reaction>
</comment>
<comment type="catalytic activity">
    <molecule>Protease-polymerase p70</molecule>
    <reaction evidence="10 14">
        <text>Endopeptidase with a preference for cleavage when the P1 position is occupied by Glu-|-Xaa and the P1' position is occupied by Gly-|-Yaa.</text>
        <dbReference type="EC" id="3.4.22.66"/>
    </reaction>
</comment>
<comment type="subunit">
    <molecule>Capsid protein</molecule>
    <text evidence="7">Homodimer. Homomultimer.</text>
</comment>
<comment type="subcellular location">
    <molecule>Capsid protein</molecule>
    <subcellularLocation>
        <location>Virion</location>
    </subcellularLocation>
    <subcellularLocation>
        <location>Host cytoplasm</location>
    </subcellularLocation>
</comment>
<comment type="alternative products">
    <event type="alternative promoter"/>
    <isoform>
        <id>Q6XDK8-1</id>
        <name>Genome polyprotein</name>
        <sequence type="displayed"/>
    </isoform>
    <isoform>
        <id>Q6XDK8-2</id>
        <name>Subgenomic capsid protein</name>
        <name>VP1</name>
        <sequence type="described" ref="VSP_034390"/>
    </isoform>
</comment>
<comment type="domain">
    <molecule>Protease-polymerase p70</molecule>
    <text evidence="16">Protease-polymerase is composed of two domains displaying two different catalytic activity. These activities may act independently.</text>
</comment>
<comment type="PTM">
    <molecule>Genome polyprotein</molecule>
    <text evidence="5 12 13 15">Specific enzymatic cleavages in vivo yield mature proteins (PubMed:15919882, PubMed:16052286, PubMed:22973264). Pro-Pol is first autocatalytically cleaved, then processes the whole polyprotein (By similarity).</text>
</comment>
<comment type="PTM">
    <molecule>Viral genome-linked protein</molecule>
    <text evidence="5">VPg is uridylylated by the polymerase and is covalently attached to the 5'-end of the polyadenylated genomic and subgenomic RNAs. This uridylylated form acts as a nucleotide-peptide primer for the polymerase.</text>
</comment>
<comment type="miscellaneous">
    <text evidence="1">Two different RNAs lead the expression of the capsid protein. One arises from the cleavage of the polyprotein translated from the genomic RNA and the other from the translation of a subgenomic RNA derived from the (-)RNA template. Capsid protein expressed from the subgenomic mRNA is produced in much larger amounts than the cleaved one (By similarity).</text>
</comment>
<comment type="miscellaneous">
    <molecule>Isoform Genome polyprotein</molecule>
    <text>Produced from the genomic RNA.</text>
</comment>
<comment type="miscellaneous">
    <molecule>Isoform Subgenomic capsid protein</molecule>
    <text evidence="16">Produced from the subgenomic RNA.</text>
</comment>
<reference key="1">
    <citation type="journal article" date="2005" name="J. Virol.">
        <title>Proteolytic processing of sapovirus ORF1 polyprotein.</title>
        <authorList>
            <person name="Oka T."/>
            <person name="Katayama K."/>
            <person name="Ogawa S."/>
            <person name="Hansman G.S."/>
            <person name="Kageyama T."/>
            <person name="Ushijima H."/>
            <person name="Miyamura T."/>
            <person name="Takeda N."/>
        </authorList>
    </citation>
    <scope>NUCLEOTIDE SEQUENCE [GENOMIC RNA]</scope>
    <scope>PROTEOLYTIC CLEAVAGE (GENOME POLYPROTEIN)</scope>
    <scope>MUTAGENESIS OF CYS-1171</scope>
</reference>
<reference key="2">
    <citation type="journal article" date="2005" name="Arch. Virol.">
        <title>Cleavage activity of the sapovirus 3C-like protease in Escherichia coli.</title>
        <authorList>
            <person name="Oka T."/>
            <person name="Katayama K."/>
            <person name="Ogawa S."/>
            <person name="Hansman G.S."/>
            <person name="Kageyama T."/>
            <person name="Miyamura T."/>
            <person name="Takeda N."/>
        </authorList>
    </citation>
    <scope>PROTEIN SEQUENCE OF 1056-1060</scope>
    <scope>PROTEOLYTIC CLEAVAGE (GENOME POLYPROTEIN)</scope>
</reference>
<reference key="3">
    <citation type="journal article" date="2007" name="J. Virol.">
        <title>Highly conserved configuration of catalytic amino acid residues among calicivirus-encoded proteases.</title>
        <authorList>
            <person name="Oka T."/>
            <person name="Yamamoto M."/>
            <person name="Yokoyama M."/>
            <person name="Ogawa S."/>
            <person name="Hansman G.S."/>
            <person name="Katayama K."/>
            <person name="Miyashita K."/>
            <person name="Takagi H."/>
            <person name="Tohya Y."/>
            <person name="Sato H."/>
            <person name="Takeda N."/>
        </authorList>
    </citation>
    <scope>MUTAGENESIS OF HIS-1069; HIS-1075; HIS-1086; GLU-1107; HIS-1120; HIS-1136; GLU-1143; GLU-1147 AND HIS-1186</scope>
    <scope>ACTIVE SITE (PROTEASE-POLYMERASE P70)</scope>
    <scope>CATALYTIC ACTIVITY (PROTEASE-POLYMERASE P70)</scope>
</reference>
<reference key="4">
    <citation type="journal article" date="2012" name="Front. Microbiol.">
        <title>Structural basis for specific recognition of substrates by sapovirus protease.</title>
        <authorList>
            <person name="Yokoyama M."/>
            <person name="Oka T."/>
            <person name="Kojima H."/>
            <person name="Nagano T."/>
            <person name="Okabe T."/>
            <person name="Katayama K."/>
            <person name="Wakita T."/>
            <person name="Kanda T."/>
            <person name="Sato H."/>
        </authorList>
    </citation>
    <scope>PROTEOLYTIC CLEAVAGE (GENOME POLYPROTEIN)</scope>
</reference>
<accession>Q6XDK8</accession>
<protein>
    <recommendedName>
        <fullName>Genome polyprotein</fullName>
    </recommendedName>
    <component>
        <recommendedName>
            <fullName>NS1</fullName>
        </recommendedName>
        <alternativeName>
            <fullName>Protein p11</fullName>
        </alternativeName>
    </component>
    <component>
        <recommendedName>
            <fullName>NS2</fullName>
        </recommendedName>
        <alternativeName>
            <fullName>Protein p28</fullName>
        </alternativeName>
    </component>
    <component>
        <recommendedName>
            <fullName>NTPase</fullName>
            <ecNumber evidence="4">3.6.1.15</ecNumber>
        </recommendedName>
        <alternativeName>
            <fullName>NS3</fullName>
        </alternativeName>
        <alternativeName>
            <fullName>p35</fullName>
        </alternativeName>
    </component>
    <component>
        <recommendedName>
            <fullName>NS4</fullName>
        </recommendedName>
        <alternativeName>
            <fullName>Protein p32</fullName>
        </alternativeName>
    </component>
    <component>
        <recommendedName>
            <fullName>Viral genome-linked protein</fullName>
            <shortName>VPg</shortName>
        </recommendedName>
        <alternativeName>
            <fullName>NS5</fullName>
        </alternativeName>
        <alternativeName>
            <fullName>p14</fullName>
        </alternativeName>
    </component>
    <component>
        <recommendedName>
            <fullName>Protease-polymerase p70</fullName>
            <shortName>Pro-Pol</shortName>
            <ecNumber evidence="6">2.7.7.48</ecNumber>
            <ecNumber evidence="14">3.4.22.66</ecNumber>
        </recommendedName>
        <alternativeName>
            <fullName>NS6-7</fullName>
        </alternativeName>
    </component>
    <component>
        <recommendedName>
            <fullName>Capsid protein</fullName>
            <shortName>CP</shortName>
        </recommendedName>
        <alternativeName>
            <fullName>VP1</fullName>
        </alternativeName>
        <alternativeName>
            <fullName>p60</fullName>
        </alternativeName>
    </component>
</protein>
<name>POLG_SVM10</name>
<keyword id="KW-0877">Alternative promoter usage</keyword>
<keyword id="KW-0067">ATP-binding</keyword>
<keyword id="KW-0167">Capsid protein</keyword>
<keyword id="KW-0191">Covalent protein-RNA linkage</keyword>
<keyword id="KW-0903">Direct protein sequencing</keyword>
<keyword id="KW-0235">DNA replication</keyword>
<keyword id="KW-1035">Host cytoplasm</keyword>
<keyword id="KW-0378">Hydrolase</keyword>
<keyword id="KW-0547">Nucleotide-binding</keyword>
<keyword id="KW-0548">Nucleotidyltransferase</keyword>
<keyword id="KW-0597">Phosphoprotein</keyword>
<keyword id="KW-0645">Protease</keyword>
<keyword id="KW-0696">RNA-directed RNA polymerase</keyword>
<keyword id="KW-0788">Thiol protease</keyword>
<keyword id="KW-0808">Transferase</keyword>
<keyword id="KW-0693">Viral RNA replication</keyword>
<keyword id="KW-0946">Virion</keyword>
<gene>
    <name type="ORF">ORF1</name>
</gene>
<dbReference type="EC" id="3.6.1.15" evidence="4"/>
<dbReference type="EC" id="2.7.7.48" evidence="6"/>
<dbReference type="EC" id="3.4.22.66" evidence="14"/>
<dbReference type="EMBL" id="AY237420">
    <property type="protein sequence ID" value="AAQ17058.2"/>
    <property type="molecule type" value="mRNA"/>
</dbReference>
<dbReference type="RefSeq" id="YP_022762.1">
    <molecule id="Q6XDK8-1"/>
    <property type="nucleotide sequence ID" value="NC_010624.1"/>
</dbReference>
<dbReference type="SMR" id="Q6XDK8"/>
<dbReference type="MEROPS" id="C24.003"/>
<dbReference type="KEGG" id="vg:2943313"/>
<dbReference type="Proteomes" id="UP000112655">
    <property type="component" value="Genome"/>
</dbReference>
<dbReference type="GO" id="GO:0030430">
    <property type="term" value="C:host cell cytoplasm"/>
    <property type="evidence" value="ECO:0007669"/>
    <property type="project" value="UniProtKB-SubCell"/>
</dbReference>
<dbReference type="GO" id="GO:0019028">
    <property type="term" value="C:viral capsid"/>
    <property type="evidence" value="ECO:0007669"/>
    <property type="project" value="UniProtKB-KW"/>
</dbReference>
<dbReference type="GO" id="GO:0005524">
    <property type="term" value="F:ATP binding"/>
    <property type="evidence" value="ECO:0007669"/>
    <property type="project" value="UniProtKB-KW"/>
</dbReference>
<dbReference type="GO" id="GO:0004197">
    <property type="term" value="F:cysteine-type endopeptidase activity"/>
    <property type="evidence" value="ECO:0007669"/>
    <property type="project" value="InterPro"/>
</dbReference>
<dbReference type="GO" id="GO:0017111">
    <property type="term" value="F:ribonucleoside triphosphate phosphatase activity"/>
    <property type="evidence" value="ECO:0007669"/>
    <property type="project" value="UniProtKB-EC"/>
</dbReference>
<dbReference type="GO" id="GO:0003723">
    <property type="term" value="F:RNA binding"/>
    <property type="evidence" value="ECO:0007669"/>
    <property type="project" value="InterPro"/>
</dbReference>
<dbReference type="GO" id="GO:0003724">
    <property type="term" value="F:RNA helicase activity"/>
    <property type="evidence" value="ECO:0007669"/>
    <property type="project" value="InterPro"/>
</dbReference>
<dbReference type="GO" id="GO:0003968">
    <property type="term" value="F:RNA-directed RNA polymerase activity"/>
    <property type="evidence" value="ECO:0007669"/>
    <property type="project" value="UniProtKB-KW"/>
</dbReference>
<dbReference type="GO" id="GO:0006260">
    <property type="term" value="P:DNA replication"/>
    <property type="evidence" value="ECO:0007669"/>
    <property type="project" value="UniProtKB-KW"/>
</dbReference>
<dbReference type="GO" id="GO:0006351">
    <property type="term" value="P:DNA-templated transcription"/>
    <property type="evidence" value="ECO:0007669"/>
    <property type="project" value="InterPro"/>
</dbReference>
<dbReference type="GO" id="GO:0006508">
    <property type="term" value="P:proteolysis"/>
    <property type="evidence" value="ECO:0007669"/>
    <property type="project" value="UniProtKB-KW"/>
</dbReference>
<dbReference type="GO" id="GO:0039694">
    <property type="term" value="P:viral RNA genome replication"/>
    <property type="evidence" value="ECO:0007669"/>
    <property type="project" value="InterPro"/>
</dbReference>
<dbReference type="CDD" id="cd00009">
    <property type="entry name" value="AAA"/>
    <property type="match status" value="1"/>
</dbReference>
<dbReference type="CDD" id="cd23192">
    <property type="entry name" value="Caliciviridae_RdRp"/>
    <property type="match status" value="1"/>
</dbReference>
<dbReference type="CDD" id="cd00205">
    <property type="entry name" value="rhv_like"/>
    <property type="match status" value="1"/>
</dbReference>
<dbReference type="Gene3D" id="1.10.260.110">
    <property type="match status" value="1"/>
</dbReference>
<dbReference type="Gene3D" id="1.20.960.20">
    <property type="match status" value="1"/>
</dbReference>
<dbReference type="Gene3D" id="2.60.120.20">
    <property type="match status" value="1"/>
</dbReference>
<dbReference type="Gene3D" id="3.30.70.270">
    <property type="match status" value="2"/>
</dbReference>
<dbReference type="Gene3D" id="6.10.250.3230">
    <property type="match status" value="1"/>
</dbReference>
<dbReference type="Gene3D" id="3.40.50.300">
    <property type="entry name" value="P-loop containing nucleotide triphosphate hydrolases"/>
    <property type="match status" value="1"/>
</dbReference>
<dbReference type="InterPro" id="IPR004005">
    <property type="entry name" value="Calicivirus_coat"/>
</dbReference>
<dbReference type="InterPro" id="IPR043502">
    <property type="entry name" value="DNA/RNA_pol_sf"/>
</dbReference>
<dbReference type="InterPro" id="IPR004004">
    <property type="entry name" value="Helic/Pol/Pept_Calicivir-typ"/>
</dbReference>
<dbReference type="InterPro" id="IPR000605">
    <property type="entry name" value="Helicase_SF3_ssDNA/RNA_vir"/>
</dbReference>
<dbReference type="InterPro" id="IPR014759">
    <property type="entry name" value="Helicase_SF3_ssRNA_vir"/>
</dbReference>
<dbReference type="InterPro" id="IPR027417">
    <property type="entry name" value="P-loop_NTPase"/>
</dbReference>
<dbReference type="InterPro" id="IPR000317">
    <property type="entry name" value="Peptidase_C24"/>
</dbReference>
<dbReference type="InterPro" id="IPR009003">
    <property type="entry name" value="Peptidase_S1_PA"/>
</dbReference>
<dbReference type="InterPro" id="IPR043128">
    <property type="entry name" value="Rev_trsase/Diguanyl_cyclase"/>
</dbReference>
<dbReference type="InterPro" id="IPR033703">
    <property type="entry name" value="Rhv-like"/>
</dbReference>
<dbReference type="InterPro" id="IPR001205">
    <property type="entry name" value="RNA-dir_pol_C"/>
</dbReference>
<dbReference type="InterPro" id="IPR007094">
    <property type="entry name" value="RNA-dir_pol_PSvirus"/>
</dbReference>
<dbReference type="InterPro" id="IPR029053">
    <property type="entry name" value="Viral_coat"/>
</dbReference>
<dbReference type="InterPro" id="IPR049434">
    <property type="entry name" value="VPg"/>
</dbReference>
<dbReference type="Pfam" id="PF00915">
    <property type="entry name" value="Calici_coat"/>
    <property type="match status" value="1"/>
</dbReference>
<dbReference type="Pfam" id="PF03510">
    <property type="entry name" value="Peptidase_C24"/>
    <property type="match status" value="1"/>
</dbReference>
<dbReference type="Pfam" id="PF00680">
    <property type="entry name" value="RdRP_1"/>
    <property type="match status" value="1"/>
</dbReference>
<dbReference type="Pfam" id="PF00910">
    <property type="entry name" value="RNA_helicase"/>
    <property type="match status" value="1"/>
</dbReference>
<dbReference type="Pfam" id="PF20915">
    <property type="entry name" value="VPg"/>
    <property type="match status" value="1"/>
</dbReference>
<dbReference type="PRINTS" id="PR00916">
    <property type="entry name" value="2CENDOPTASE"/>
</dbReference>
<dbReference type="PRINTS" id="PR00918">
    <property type="entry name" value="CALICVIRUSNS"/>
</dbReference>
<dbReference type="SUPFAM" id="SSF56672">
    <property type="entry name" value="DNA/RNA polymerases"/>
    <property type="match status" value="1"/>
</dbReference>
<dbReference type="SUPFAM" id="SSF52540">
    <property type="entry name" value="P-loop containing nucleoside triphosphate hydrolases"/>
    <property type="match status" value="1"/>
</dbReference>
<dbReference type="SUPFAM" id="SSF88633">
    <property type="entry name" value="Positive stranded ssRNA viruses"/>
    <property type="match status" value="1"/>
</dbReference>
<dbReference type="SUPFAM" id="SSF50494">
    <property type="entry name" value="Trypsin-like serine proteases"/>
    <property type="match status" value="1"/>
</dbReference>
<dbReference type="PROSITE" id="PS51894">
    <property type="entry name" value="CV_3CL_PRO"/>
    <property type="match status" value="1"/>
</dbReference>
<dbReference type="PROSITE" id="PS50507">
    <property type="entry name" value="RDRP_SSRNA_POS"/>
    <property type="match status" value="1"/>
</dbReference>
<dbReference type="PROSITE" id="PS51218">
    <property type="entry name" value="SF3_HELICASE_2"/>
    <property type="match status" value="1"/>
</dbReference>
<feature type="chain" id="PRO_0000342101" description="Genome polyprotein">
    <location>
        <begin position="1"/>
        <end position="2278"/>
    </location>
</feature>
<feature type="chain" id="PRO_0000342102" description="NS1">
    <location>
        <begin position="1"/>
        <end position="69"/>
    </location>
</feature>
<feature type="chain" id="PRO_0000342103" description="NS2">
    <location>
        <begin position="70"/>
        <end position="325"/>
    </location>
</feature>
<feature type="chain" id="PRO_0000342104" description="NTPase">
    <location>
        <begin position="326"/>
        <end position="666"/>
    </location>
</feature>
<feature type="chain" id="PRO_0000342105" description="NS4">
    <location>
        <begin position="667"/>
        <end position="940"/>
    </location>
</feature>
<feature type="chain" id="PRO_0000342106" description="Viral genome-linked protein">
    <location>
        <begin position="941"/>
        <end position="1055"/>
    </location>
</feature>
<feature type="chain" id="PRO_0000342107" description="Protease-polymerase p70">
    <location>
        <begin position="1056"/>
        <end position="1722"/>
    </location>
</feature>
<feature type="chain" id="PRO_5000090469" description="Capsid protein">
    <location>
        <begin position="1723"/>
        <end position="2278"/>
    </location>
</feature>
<feature type="domain" description="SF3 helicase" evidence="9">
    <location>
        <begin position="454"/>
        <end position="609"/>
    </location>
</feature>
<feature type="domain" description="Peptidase C24" evidence="10">
    <location>
        <begin position="1056"/>
        <end position="1204"/>
    </location>
</feature>
<feature type="domain" description="RdRp catalytic" evidence="8">
    <location>
        <begin position="1443"/>
        <end position="1568"/>
    </location>
</feature>
<feature type="region of interest" description="Disordered" evidence="11">
    <location>
        <begin position="939"/>
        <end position="958"/>
    </location>
</feature>
<feature type="compositionally biased region" description="Basic residues" evidence="11">
    <location>
        <begin position="944"/>
        <end position="956"/>
    </location>
</feature>
<feature type="active site" description="For 3CLpro activity" evidence="10 14">
    <location>
        <position position="1086"/>
    </location>
</feature>
<feature type="active site" description="For 3CLpro activity" evidence="10 14">
    <location>
        <position position="1107"/>
    </location>
</feature>
<feature type="active site" description="For 3CLpro activity" evidence="10 14">
    <location>
        <position position="1171"/>
    </location>
</feature>
<feature type="binding site" evidence="9">
    <location>
        <begin position="481"/>
        <end position="488"/>
    </location>
    <ligand>
        <name>ATP</name>
        <dbReference type="ChEBI" id="CHEBI:30616"/>
    </ligand>
</feature>
<feature type="site" description="Cleavage; by Pro-Pol" evidence="15">
    <location>
        <begin position="69"/>
        <end position="70"/>
    </location>
</feature>
<feature type="site" description="Cleavage; by Pro-Pol" evidence="15">
    <location>
        <begin position="325"/>
        <end position="326"/>
    </location>
</feature>
<feature type="site" description="Cleavage; by Pro-Pol" evidence="15">
    <location>
        <begin position="666"/>
        <end position="667"/>
    </location>
</feature>
<feature type="site" description="Cleavage; by Pro-Pol" evidence="12 15">
    <location>
        <begin position="940"/>
        <end position="941"/>
    </location>
</feature>
<feature type="site" description="Cleavage; by Pro-Pol" evidence="12 13 15">
    <location>
        <begin position="1055"/>
        <end position="1056"/>
    </location>
</feature>
<feature type="site" description="Cleavage; by Pro-Pol" evidence="15">
    <location>
        <begin position="1722"/>
        <end position="1723"/>
    </location>
</feature>
<feature type="modified residue" description="O-(5'-phospho-RNA)-tyrosine" evidence="2">
    <location>
        <position position="966"/>
    </location>
</feature>
<feature type="splice variant" id="VSP_034390" description="In isoform Subgenomic capsid protein." evidence="16">
    <location>
        <begin position="1"/>
        <end position="1720"/>
    </location>
</feature>
<feature type="mutagenesis site" description="No effect on protease activity in vitro." evidence="14">
    <original>H</original>
    <variation>A</variation>
    <location>
        <position position="1069"/>
    </location>
</feature>
<feature type="mutagenesis site" description="No effect on protease activity in vitro." evidence="14">
    <original>H</original>
    <variation>A</variation>
    <location>
        <position position="1075"/>
    </location>
</feature>
<feature type="mutagenesis site" description="Complete loss of protease activity in vitro." evidence="14">
    <original>H</original>
    <variation>A</variation>
    <location>
        <position position="1086"/>
    </location>
</feature>
<feature type="mutagenesis site" description="Complete loss of protease activity in vitro." evidence="14">
    <original>E</original>
    <variation>A</variation>
    <location>
        <position position="1107"/>
    </location>
</feature>
<feature type="mutagenesis site" description="No effect on protease activity in vitro." evidence="14">
    <original>H</original>
    <variation>A</variation>
    <location>
        <position position="1120"/>
    </location>
</feature>
<feature type="mutagenesis site" description="No effect on protease activity in vitro." evidence="14">
    <original>H</original>
    <variation>A</variation>
    <location>
        <position position="1136"/>
    </location>
</feature>
<feature type="mutagenesis site" description="No effect on protease activity in vitro." evidence="14">
    <original>E</original>
    <variation>A</variation>
    <location>
        <position position="1143"/>
    </location>
</feature>
<feature type="mutagenesis site" description="No effect on protease activity in vitro." evidence="14">
    <original>E</original>
    <variation>A</variation>
    <location>
        <position position="1147"/>
    </location>
</feature>
<feature type="mutagenesis site" description="Complete loss of protease activity in vitro." evidence="12">
    <original>C</original>
    <variation>A</variation>
    <location>
        <position position="1171"/>
    </location>
</feature>
<feature type="mutagenesis site" description="No effect on protease activity in vitro." evidence="14">
    <original>H</original>
    <variation>A</variation>
    <location>
        <position position="1186"/>
    </location>
</feature>
<organismHost>
    <name type="scientific">Homo sapiens</name>
    <name type="common">Human</name>
    <dbReference type="NCBI Taxonomy" id="9606"/>
</organismHost>
<organism>
    <name type="scientific">Sapporo virus (isolate GII/Human/Thailand/Mc10/2000)</name>
    <name type="common">Hu/SaV/Mc10/2000/Thailand</name>
    <dbReference type="NCBI Taxonomy" id="234601"/>
    <lineage>
        <taxon>Viruses</taxon>
        <taxon>Riboviria</taxon>
        <taxon>Orthornavirae</taxon>
        <taxon>Pisuviricota</taxon>
        <taxon>Pisoniviricetes</taxon>
        <taxon>Picornavirales</taxon>
        <taxon>Caliciviridae</taxon>
        <taxon>Sapovirus</taxon>
        <taxon>Sapporo virus</taxon>
    </lineage>
</organism>
<proteinExistence type="evidence at protein level"/>
<evidence type="ECO:0000250" key="1"/>
<evidence type="ECO:0000250" key="2">
    <source>
        <dbReference type="UniProtKB" id="P27409"/>
    </source>
</evidence>
<evidence type="ECO:0000250" key="3">
    <source>
        <dbReference type="UniProtKB" id="P54634"/>
    </source>
</evidence>
<evidence type="ECO:0000250" key="4">
    <source>
        <dbReference type="UniProtKB" id="Q04544"/>
    </source>
</evidence>
<evidence type="ECO:0000250" key="5">
    <source>
        <dbReference type="UniProtKB" id="Q66914"/>
    </source>
</evidence>
<evidence type="ECO:0000250" key="6">
    <source>
        <dbReference type="UniProtKB" id="Q69014"/>
    </source>
</evidence>
<evidence type="ECO:0000250" key="7">
    <source>
        <dbReference type="UniProtKB" id="Q9QEJ5"/>
    </source>
</evidence>
<evidence type="ECO:0000255" key="8">
    <source>
        <dbReference type="PROSITE-ProRule" id="PRU00539"/>
    </source>
</evidence>
<evidence type="ECO:0000255" key="9">
    <source>
        <dbReference type="PROSITE-ProRule" id="PRU00551"/>
    </source>
</evidence>
<evidence type="ECO:0000255" key="10">
    <source>
        <dbReference type="PROSITE-ProRule" id="PRU01242"/>
    </source>
</evidence>
<evidence type="ECO:0000256" key="11">
    <source>
        <dbReference type="SAM" id="MobiDB-lite"/>
    </source>
</evidence>
<evidence type="ECO:0000269" key="12">
    <source>
    </source>
</evidence>
<evidence type="ECO:0000269" key="13">
    <source>
    </source>
</evidence>
<evidence type="ECO:0000269" key="14">
    <source>
    </source>
</evidence>
<evidence type="ECO:0000269" key="15">
    <source>
    </source>
</evidence>
<evidence type="ECO:0000305" key="16"/>